<protein>
    <recommendedName>
        <fullName>Spore coat assembly protein ExsA</fullName>
    </recommendedName>
</protein>
<name>EXSA_BACCE</name>
<organism>
    <name type="scientific">Bacillus cereus</name>
    <dbReference type="NCBI Taxonomy" id="1396"/>
    <lineage>
        <taxon>Bacteria</taxon>
        <taxon>Bacillati</taxon>
        <taxon>Bacillota</taxon>
        <taxon>Bacilli</taxon>
        <taxon>Bacillales</taxon>
        <taxon>Bacillaceae</taxon>
        <taxon>Bacillus</taxon>
        <taxon>Bacillus cereus group</taxon>
    </lineage>
</organism>
<feature type="chain" id="PRO_0000248939" description="Spore coat assembly protein ExsA">
    <location>
        <begin position="1"/>
        <end position="643"/>
    </location>
</feature>
<feature type="domain" description="LysM" evidence="1">
    <location>
        <begin position="2"/>
        <end position="47"/>
    </location>
</feature>
<feature type="repeat" description="1-1">
    <location>
        <begin position="113"/>
        <end position="120"/>
    </location>
</feature>
<feature type="repeat" description="1-2">
    <location>
        <begin position="121"/>
        <end position="128"/>
    </location>
</feature>
<feature type="repeat" description="1-3">
    <location>
        <begin position="129"/>
        <end position="136"/>
    </location>
</feature>
<feature type="repeat" description="1-4">
    <location>
        <begin position="137"/>
        <end position="144"/>
    </location>
</feature>
<feature type="repeat" description="2-1">
    <location>
        <begin position="238"/>
        <end position="250"/>
    </location>
</feature>
<feature type="repeat" description="2-2">
    <location>
        <begin position="251"/>
        <end position="263"/>
    </location>
</feature>
<feature type="repeat" description="2-3">
    <location>
        <begin position="264"/>
        <end position="276"/>
    </location>
</feature>
<feature type="repeat" description="2-4">
    <location>
        <begin position="277"/>
        <end position="289"/>
    </location>
</feature>
<feature type="repeat" description="2-5">
    <location>
        <begin position="290"/>
        <end position="302"/>
    </location>
</feature>
<feature type="repeat" description="2-6">
    <location>
        <begin position="303"/>
        <end position="315"/>
    </location>
</feature>
<feature type="repeat" description="2-7">
    <location>
        <begin position="316"/>
        <end position="328"/>
    </location>
</feature>
<feature type="repeat" description="3-1">
    <location>
        <begin position="354"/>
        <end position="365"/>
    </location>
</feature>
<feature type="repeat" description="3-2">
    <location>
        <begin position="366"/>
        <end position="377"/>
    </location>
</feature>
<feature type="repeat" description="3-3">
    <location>
        <begin position="378"/>
        <end position="389"/>
    </location>
</feature>
<feature type="repeat" description="3-4">
    <location>
        <begin position="390"/>
        <end position="401"/>
    </location>
</feature>
<feature type="repeat" description="3-5">
    <location>
        <begin position="402"/>
        <end position="413"/>
    </location>
</feature>
<feature type="repeat" description="3-6">
    <location>
        <begin position="414"/>
        <end position="425"/>
    </location>
</feature>
<feature type="repeat" description="3-7">
    <location>
        <begin position="426"/>
        <end position="437"/>
    </location>
</feature>
<feature type="repeat" description="3-8">
    <location>
        <begin position="438"/>
        <end position="449"/>
    </location>
</feature>
<feature type="repeat" description="3-9">
    <location>
        <begin position="450"/>
        <end position="461"/>
    </location>
</feature>
<feature type="repeat" description="3-10">
    <location>
        <begin position="462"/>
        <end position="473"/>
    </location>
</feature>
<feature type="repeat" description="3-11">
    <location>
        <begin position="474"/>
        <end position="485"/>
    </location>
</feature>
<feature type="repeat" description="3-12">
    <location>
        <begin position="486"/>
        <end position="497"/>
    </location>
</feature>
<feature type="repeat" description="3-13">
    <location>
        <begin position="498"/>
        <end position="509"/>
    </location>
</feature>
<feature type="repeat" description="3-14">
    <location>
        <begin position="510"/>
        <end position="521"/>
    </location>
</feature>
<feature type="region of interest" description="4 X 8 AA tandem repeats of Q-[IV]-K-P-Q-K-E-[MV]">
    <location>
        <begin position="113"/>
        <end position="144"/>
    </location>
</feature>
<feature type="region of interest" description="Disordered" evidence="2">
    <location>
        <begin position="115"/>
        <end position="160"/>
    </location>
</feature>
<feature type="region of interest" description="7 X 13 AA tandem repeats of P-Q-V-K-K-E-N-V-G-N-I-V-S">
    <location>
        <begin position="238"/>
        <end position="328"/>
    </location>
</feature>
<feature type="region of interest" description="14 X 12 AA tandem repeats of I-M-D-N-N-Q-[MP]-P-N-[IM]-M-P">
    <location>
        <begin position="354"/>
        <end position="521"/>
    </location>
</feature>
<feature type="region of interest" description="Disordered" evidence="2">
    <location>
        <begin position="585"/>
        <end position="643"/>
    </location>
</feature>
<feature type="compositionally biased region" description="Basic and acidic residues" evidence="2">
    <location>
        <begin position="115"/>
        <end position="157"/>
    </location>
</feature>
<feature type="compositionally biased region" description="Acidic residues" evidence="2">
    <location>
        <begin position="634"/>
        <end position="643"/>
    </location>
</feature>
<dbReference type="EMBL" id="AY682718">
    <property type="protein sequence ID" value="AAT84585.1"/>
    <property type="molecule type" value="Genomic_DNA"/>
</dbReference>
<dbReference type="GO" id="GO:0008932">
    <property type="term" value="F:lytic endotransglycosylase activity"/>
    <property type="evidence" value="ECO:0007669"/>
    <property type="project" value="TreeGrafter"/>
</dbReference>
<dbReference type="GO" id="GO:0030435">
    <property type="term" value="P:sporulation resulting in formation of a cellular spore"/>
    <property type="evidence" value="ECO:0007669"/>
    <property type="project" value="UniProtKB-KW"/>
</dbReference>
<dbReference type="CDD" id="cd00118">
    <property type="entry name" value="LysM"/>
    <property type="match status" value="1"/>
</dbReference>
<dbReference type="Gene3D" id="3.10.350.10">
    <property type="entry name" value="LysM domain"/>
    <property type="match status" value="1"/>
</dbReference>
<dbReference type="InterPro" id="IPR001387">
    <property type="entry name" value="Cro/C1-type_HTH"/>
</dbReference>
<dbReference type="InterPro" id="IPR018392">
    <property type="entry name" value="LysM_dom"/>
</dbReference>
<dbReference type="InterPro" id="IPR036779">
    <property type="entry name" value="LysM_dom_sf"/>
</dbReference>
<dbReference type="InterPro" id="IPR014248">
    <property type="entry name" value="Spore_coat_assembly_SafA"/>
</dbReference>
<dbReference type="NCBIfam" id="TIGR02899">
    <property type="entry name" value="spore_safA"/>
    <property type="match status" value="1"/>
</dbReference>
<dbReference type="PANTHER" id="PTHR33734">
    <property type="entry name" value="LYSM DOMAIN-CONTAINING GPI-ANCHORED PROTEIN 2"/>
    <property type="match status" value="1"/>
</dbReference>
<dbReference type="PANTHER" id="PTHR33734:SF34">
    <property type="entry name" value="SPOIVD-ASSOCIATED FACTOR A"/>
    <property type="match status" value="1"/>
</dbReference>
<dbReference type="Pfam" id="PF01476">
    <property type="entry name" value="LysM"/>
    <property type="match status" value="1"/>
</dbReference>
<dbReference type="SMART" id="SM00257">
    <property type="entry name" value="LysM"/>
    <property type="match status" value="1"/>
</dbReference>
<dbReference type="SUPFAM" id="SSF54106">
    <property type="entry name" value="LysM domain"/>
    <property type="match status" value="1"/>
</dbReference>
<dbReference type="PROSITE" id="PS51782">
    <property type="entry name" value="LYSM"/>
    <property type="match status" value="1"/>
</dbReference>
<comment type="function">
    <text evidence="3">Required for the normal assembly and anchoring of both the spore coat and the exosporium layers.</text>
</comment>
<comment type="induction">
    <text>Expressed in the mother cell during sporulation.</text>
</comment>
<comment type="disruption phenotype">
    <text evidence="3">Spores are extremely permeable to lysozyme and are blocked in late stages of germination.</text>
</comment>
<comment type="similarity">
    <text evidence="4">To B.subtilis SafA.</text>
</comment>
<evidence type="ECO:0000255" key="1">
    <source>
        <dbReference type="PROSITE-ProRule" id="PRU01118"/>
    </source>
</evidence>
<evidence type="ECO:0000256" key="2">
    <source>
        <dbReference type="SAM" id="MobiDB-lite"/>
    </source>
</evidence>
<evidence type="ECO:0000269" key="3">
    <source>
    </source>
</evidence>
<evidence type="ECO:0000305" key="4"/>
<keyword id="KW-0677">Repeat</keyword>
<keyword id="KW-0749">Sporulation</keyword>
<accession>Q6B4J5</accession>
<proteinExistence type="evidence at transcript level"/>
<sequence>MKIHIVQKGDTLWKIAKKYGVDFDTLKKTNTQLSNPDLIMPGMKIKVPSKSVHMKQQAGAGSAPPKQYVKEVQQKEFAATPTPLGIEDEEEVTYQSAPITQQPAMQQTQKEVQIKPQKEMQVKPQKEVQVKPQKEMQVKPQKEVQKEQPIQKEKPVEKPSVIQKPPVIEKQKPAEKENTKFSVNVLPQPPQPPIKPKKEYKISDVIKKGSELIAPQISKMKPNNIISPQTKKNNIISPQVKKENVGNIVSPQVKKENVGNIVSPQVKKENVGNIVSPQVKKENVGNIVSPQVKKENVGNIVSPQVKKENVGNIVSPQVKKENVGNIVSPNVSKENVVIPQVIPPNIQMPNIMPIMDNNQPPNIMPIMDNNQPPNIMPIMDNNQMPNMMPIMDNNQMPNMMPIMDNNQMPNMMPIMDNNQMPNMMPIMDNNQMPNMMPIMDNNQMPNMMPIMDNNQMPNMMPIMDNNQMPNIMPIMDNNQMPNMMPIMDNNQMPNIMPIMDNNQMPNMMPIMDNNQPPNMMPYQMPYQQPMMPPNPYYQQPNPYQMPYQQGAPFGPQHTSMPNQNMMPMDNNMPPLVQGEEDCGCGGESRLYSPQPGGPQYANPLYYQPTQSAYAPQPGTMYYQPDPPNVFGEPVSEEEDEEEV</sequence>
<reference key="1">
    <citation type="journal article" date="2005" name="J. Bacteriol.">
        <title>The ExsA protein of Bacillus cereus is required for assembly of coat and exosporium onto the spore surface.</title>
        <authorList>
            <person name="Bailey-Smith K."/>
            <person name="Todd S.J."/>
            <person name="Southworth T.W."/>
            <person name="Proctor J."/>
            <person name="Moir A."/>
        </authorList>
    </citation>
    <scope>NUCLEOTIDE SEQUENCE [GENOMIC DNA]</scope>
    <scope>FUNCTION</scope>
    <scope>DISRUPTION PHENOTYPE</scope>
    <source>
        <strain>ATCC 10876 / DSM 9378 / NRRL B-569</strain>
    </source>
</reference>
<gene>
    <name type="primary">exsA</name>
</gene>